<reference key="1">
    <citation type="journal article" date="2003" name="Nat. Genet.">
        <title>Comparative analysis of the genome sequences of Bordetella pertussis, Bordetella parapertussis and Bordetella bronchiseptica.</title>
        <authorList>
            <person name="Parkhill J."/>
            <person name="Sebaihia M."/>
            <person name="Preston A."/>
            <person name="Murphy L.D."/>
            <person name="Thomson N.R."/>
            <person name="Harris D.E."/>
            <person name="Holden M.T.G."/>
            <person name="Churcher C.M."/>
            <person name="Bentley S.D."/>
            <person name="Mungall K.L."/>
            <person name="Cerdeno-Tarraga A.-M."/>
            <person name="Temple L."/>
            <person name="James K.D."/>
            <person name="Harris B."/>
            <person name="Quail M.A."/>
            <person name="Achtman M."/>
            <person name="Atkin R."/>
            <person name="Baker S."/>
            <person name="Basham D."/>
            <person name="Bason N."/>
            <person name="Cherevach I."/>
            <person name="Chillingworth T."/>
            <person name="Collins M."/>
            <person name="Cronin A."/>
            <person name="Davis P."/>
            <person name="Doggett J."/>
            <person name="Feltwell T."/>
            <person name="Goble A."/>
            <person name="Hamlin N."/>
            <person name="Hauser H."/>
            <person name="Holroyd S."/>
            <person name="Jagels K."/>
            <person name="Leather S."/>
            <person name="Moule S."/>
            <person name="Norberczak H."/>
            <person name="O'Neil S."/>
            <person name="Ormond D."/>
            <person name="Price C."/>
            <person name="Rabbinowitsch E."/>
            <person name="Rutter S."/>
            <person name="Sanders M."/>
            <person name="Saunders D."/>
            <person name="Seeger K."/>
            <person name="Sharp S."/>
            <person name="Simmonds M."/>
            <person name="Skelton J."/>
            <person name="Squares R."/>
            <person name="Squares S."/>
            <person name="Stevens K."/>
            <person name="Unwin L."/>
            <person name="Whitehead S."/>
            <person name="Barrell B.G."/>
            <person name="Maskell D.J."/>
        </authorList>
    </citation>
    <scope>NUCLEOTIDE SEQUENCE [LARGE SCALE GENOMIC DNA]</scope>
    <source>
        <strain>Tohama I / ATCC BAA-589 / NCTC 13251</strain>
    </source>
</reference>
<comment type="similarity">
    <text evidence="1">Belongs to the UPF0276 family.</text>
</comment>
<comment type="sequence caution" evidence="2">
    <conflict type="erroneous initiation">
        <sequence resource="EMBL-CDS" id="CAE43197"/>
    </conflict>
</comment>
<feature type="chain" id="PRO_0000192692" description="UPF0276 protein BP2925">
    <location>
        <begin position="1"/>
        <end position="289"/>
    </location>
</feature>
<sequence>MPARASRPAPGLPARAGLGFKPEHYATLVEQPPDLGFFEIHAENYMVPGGPAHAQLAWLRERYAISVHGVGLSLGGHDPLDARLLAGHRQLQRRYAPDSISEHLAWSRHDGRYFNDLLPIVYDDAALRRVCAHIDQFQQCLGQPILLENPATYVRFEASHIDEAQFLCELVARTGCGLLLDVNNVYVSAVNHGFDARAYLARLPLAAVGEIHLAGHARQRDAHGRAVLIDSHDAPVDEAVWDLYEYTLALTGPVATLLERDGNIPPLAGLLAETGRVTACLARGLALAA</sequence>
<accession>Q7VUZ0</accession>
<organism>
    <name type="scientific">Bordetella pertussis (strain Tohama I / ATCC BAA-589 / NCTC 13251)</name>
    <dbReference type="NCBI Taxonomy" id="257313"/>
    <lineage>
        <taxon>Bacteria</taxon>
        <taxon>Pseudomonadati</taxon>
        <taxon>Pseudomonadota</taxon>
        <taxon>Betaproteobacteria</taxon>
        <taxon>Burkholderiales</taxon>
        <taxon>Alcaligenaceae</taxon>
        <taxon>Bordetella</taxon>
    </lineage>
</organism>
<protein>
    <recommendedName>
        <fullName evidence="1">UPF0276 protein BP2925</fullName>
    </recommendedName>
</protein>
<evidence type="ECO:0000255" key="1">
    <source>
        <dbReference type="HAMAP-Rule" id="MF_00697"/>
    </source>
</evidence>
<evidence type="ECO:0000305" key="2"/>
<keyword id="KW-1185">Reference proteome</keyword>
<proteinExistence type="inferred from homology"/>
<gene>
    <name type="ordered locus">BP2925</name>
</gene>
<name>Y2925_BORPE</name>
<dbReference type="EMBL" id="BX640419">
    <property type="protein sequence ID" value="CAE43197.1"/>
    <property type="status" value="ALT_INIT"/>
    <property type="molecule type" value="Genomic_DNA"/>
</dbReference>
<dbReference type="RefSeq" id="NP_881507.1">
    <property type="nucleotide sequence ID" value="NC_002929.2"/>
</dbReference>
<dbReference type="RefSeq" id="WP_023853526.1">
    <property type="nucleotide sequence ID" value="NZ_CP039022.1"/>
</dbReference>
<dbReference type="SMR" id="Q7VUZ0"/>
<dbReference type="STRING" id="257313.BP2925"/>
<dbReference type="PaxDb" id="257313-BP2925"/>
<dbReference type="KEGG" id="bpe:BP2925"/>
<dbReference type="PATRIC" id="fig|257313.5.peg.3161"/>
<dbReference type="eggNOG" id="COG3220">
    <property type="taxonomic scope" value="Bacteria"/>
</dbReference>
<dbReference type="HOGENOM" id="CLU_064263_0_0_4"/>
<dbReference type="Proteomes" id="UP000002676">
    <property type="component" value="Chromosome"/>
</dbReference>
<dbReference type="Gene3D" id="3.20.20.150">
    <property type="entry name" value="Divalent-metal-dependent TIM barrel enzymes"/>
    <property type="match status" value="1"/>
</dbReference>
<dbReference type="HAMAP" id="MF_00697">
    <property type="entry name" value="UPF0276"/>
    <property type="match status" value="1"/>
</dbReference>
<dbReference type="InterPro" id="IPR007801">
    <property type="entry name" value="MbnB/TglH/ChrH"/>
</dbReference>
<dbReference type="InterPro" id="IPR036237">
    <property type="entry name" value="Xyl_isomerase-like_sf"/>
</dbReference>
<dbReference type="NCBIfam" id="NF003818">
    <property type="entry name" value="PRK05409.1"/>
    <property type="match status" value="1"/>
</dbReference>
<dbReference type="PANTHER" id="PTHR42194">
    <property type="entry name" value="UPF0276 PROTEIN HI_1600"/>
    <property type="match status" value="1"/>
</dbReference>
<dbReference type="PANTHER" id="PTHR42194:SF1">
    <property type="entry name" value="UPF0276 PROTEIN HI_1600"/>
    <property type="match status" value="1"/>
</dbReference>
<dbReference type="Pfam" id="PF05114">
    <property type="entry name" value="MbnB_TglH_ChrH"/>
    <property type="match status" value="1"/>
</dbReference>
<dbReference type="SUPFAM" id="SSF51658">
    <property type="entry name" value="Xylose isomerase-like"/>
    <property type="match status" value="1"/>
</dbReference>